<protein>
    <recommendedName>
        <fullName evidence="1">tRNA (guanine(26)-N(2))-dimethyltransferase</fullName>
        <ecNumber evidence="1">2.1.1.216</ecNumber>
    </recommendedName>
    <alternativeName>
        <fullName evidence="1">tRNA 2,2-dimethylguanosine-26 methyltransferase</fullName>
    </alternativeName>
    <alternativeName>
        <fullName evidence="1">tRNA(guanine-26,N(2)-N(2)) methyltransferase</fullName>
    </alternativeName>
    <alternativeName>
        <fullName evidence="1">tRNA(m(2,2)G26)dimethyltransferase</fullName>
    </alternativeName>
</protein>
<evidence type="ECO:0000255" key="1">
    <source>
        <dbReference type="HAMAP-Rule" id="MF_00290"/>
    </source>
</evidence>
<dbReference type="EC" id="2.1.1.216" evidence="1"/>
<dbReference type="EMBL" id="AE009439">
    <property type="protein sequence ID" value="AAM01371.1"/>
    <property type="molecule type" value="Genomic_DNA"/>
</dbReference>
<dbReference type="RefSeq" id="WP_011018526.1">
    <property type="nucleotide sequence ID" value="NC_003551.1"/>
</dbReference>
<dbReference type="SMR" id="Q8TYY7"/>
<dbReference type="FunCoup" id="Q8TYY7">
    <property type="interactions" value="195"/>
</dbReference>
<dbReference type="STRING" id="190192.MK0154"/>
<dbReference type="PaxDb" id="190192-MK0154"/>
<dbReference type="EnsemblBacteria" id="AAM01371">
    <property type="protein sequence ID" value="AAM01371"/>
    <property type="gene ID" value="MK0154"/>
</dbReference>
<dbReference type="GeneID" id="1477457"/>
<dbReference type="KEGG" id="mka:MK0154"/>
<dbReference type="HOGENOM" id="CLU_010862_5_1_2"/>
<dbReference type="InParanoid" id="Q8TYY7"/>
<dbReference type="OrthoDB" id="372177at2157"/>
<dbReference type="Proteomes" id="UP000001826">
    <property type="component" value="Chromosome"/>
</dbReference>
<dbReference type="GO" id="GO:0160104">
    <property type="term" value="F:tRNA (guanine(26)-N2)-dimethyltransferase activity"/>
    <property type="evidence" value="ECO:0007669"/>
    <property type="project" value="UniProtKB-UniRule"/>
</dbReference>
<dbReference type="GO" id="GO:0000049">
    <property type="term" value="F:tRNA binding"/>
    <property type="evidence" value="ECO:0007669"/>
    <property type="project" value="UniProtKB-KW"/>
</dbReference>
<dbReference type="GO" id="GO:0002940">
    <property type="term" value="P:tRNA N2-guanine methylation"/>
    <property type="evidence" value="ECO:0007669"/>
    <property type="project" value="TreeGrafter"/>
</dbReference>
<dbReference type="Gene3D" id="3.30.56.70">
    <property type="entry name" value="N2,N2-dimethylguanosine tRNA methyltransferase, C-terminal domain"/>
    <property type="match status" value="1"/>
</dbReference>
<dbReference type="Gene3D" id="3.40.50.150">
    <property type="entry name" value="Vaccinia Virus protein VP39"/>
    <property type="match status" value="1"/>
</dbReference>
<dbReference type="HAMAP" id="MF_00290">
    <property type="entry name" value="tRNA_dimethyltr_TRM1"/>
    <property type="match status" value="1"/>
</dbReference>
<dbReference type="InterPro" id="IPR029063">
    <property type="entry name" value="SAM-dependent_MTases_sf"/>
</dbReference>
<dbReference type="InterPro" id="IPR002905">
    <property type="entry name" value="Trm1"/>
</dbReference>
<dbReference type="InterPro" id="IPR022923">
    <property type="entry name" value="TRM1_arc_bac"/>
</dbReference>
<dbReference type="InterPro" id="IPR042296">
    <property type="entry name" value="tRNA_met_Trm1_C"/>
</dbReference>
<dbReference type="NCBIfam" id="TIGR00308">
    <property type="entry name" value="TRM1"/>
    <property type="match status" value="1"/>
</dbReference>
<dbReference type="PANTHER" id="PTHR10631">
    <property type="entry name" value="N 2 ,N 2 -DIMETHYLGUANOSINE TRNA METHYLTRANSFERASE"/>
    <property type="match status" value="1"/>
</dbReference>
<dbReference type="PANTHER" id="PTHR10631:SF3">
    <property type="entry name" value="TRNA (GUANINE(26)-N(2))-DIMETHYLTRANSFERASE"/>
    <property type="match status" value="1"/>
</dbReference>
<dbReference type="Pfam" id="PF02005">
    <property type="entry name" value="TRM"/>
    <property type="match status" value="1"/>
</dbReference>
<dbReference type="SUPFAM" id="SSF53335">
    <property type="entry name" value="S-adenosyl-L-methionine-dependent methyltransferases"/>
    <property type="match status" value="1"/>
</dbReference>
<dbReference type="PROSITE" id="PS51626">
    <property type="entry name" value="SAM_MT_TRM1"/>
    <property type="match status" value="1"/>
</dbReference>
<keyword id="KW-0479">Metal-binding</keyword>
<keyword id="KW-0489">Methyltransferase</keyword>
<keyword id="KW-1185">Reference proteome</keyword>
<keyword id="KW-0694">RNA-binding</keyword>
<keyword id="KW-0949">S-adenosyl-L-methionine</keyword>
<keyword id="KW-0808">Transferase</keyword>
<keyword id="KW-0819">tRNA processing</keyword>
<keyword id="KW-0820">tRNA-binding</keyword>
<keyword id="KW-0862">Zinc</keyword>
<reference key="1">
    <citation type="journal article" date="2002" name="Proc. Natl. Acad. Sci. U.S.A.">
        <title>The complete genome of hyperthermophile Methanopyrus kandleri AV19 and monophyly of archaeal methanogens.</title>
        <authorList>
            <person name="Slesarev A.I."/>
            <person name="Mezhevaya K.V."/>
            <person name="Makarova K.S."/>
            <person name="Polushin N.N."/>
            <person name="Shcherbinina O.V."/>
            <person name="Shakhova V.V."/>
            <person name="Belova G.I."/>
            <person name="Aravind L."/>
            <person name="Natale D.A."/>
            <person name="Rogozin I.B."/>
            <person name="Tatusov R.L."/>
            <person name="Wolf Y.I."/>
            <person name="Stetter K.O."/>
            <person name="Malykh A.G."/>
            <person name="Koonin E.V."/>
            <person name="Kozyavkin S.A."/>
        </authorList>
    </citation>
    <scope>NUCLEOTIDE SEQUENCE [LARGE SCALE GENOMIC DNA]</scope>
    <source>
        <strain>AV19 / DSM 6324 / JCM 9639 / NBRC 100938</strain>
    </source>
</reference>
<sequence length="383" mass="43035">MELEIITEGRTPLKVPKTRGQPSARDPVFYNPAMQLSRDLTVSSLVQYGPKIVCDPLAGVGARGIRIAVELSPEVVVLNDLNPRAVELIEENVRLNDVEDVCRIENRDANALMHEDELAGRFDYVDIDPFGPPVPFLDAAVRTVRNRGVVGISATDVSALAGRYPRSARRKYWVEVERVEFYQEVAIRALISYIVRTCAKYDLAFEPHIAFFQRHHVRVIGEIRRGARRADRALKRLGYLLHCRECGYTSEREFDRECPRCGSGSVVRLGPLWLPDFADRERAERAASDARELGLEEAAELLETVAKETGTNPWAYDIHRWASRLGLSRVPSLTSVLEGLREEGFNAVRPHYSKRAVVKTDASPEEFEAVLTEVAGDSGCLHR</sequence>
<feature type="chain" id="PRO_1000197035" description="tRNA (guanine(26)-N(2))-dimethyltransferase">
    <location>
        <begin position="1"/>
        <end position="383"/>
    </location>
</feature>
<feature type="domain" description="Trm1 methyltransferase" evidence="1">
    <location>
        <begin position="4"/>
        <end position="371"/>
    </location>
</feature>
<feature type="binding site" evidence="1">
    <location>
        <position position="38"/>
    </location>
    <ligand>
        <name>S-adenosyl-L-methionine</name>
        <dbReference type="ChEBI" id="CHEBI:59789"/>
    </ligand>
</feature>
<feature type="binding site" evidence="1">
    <location>
        <position position="63"/>
    </location>
    <ligand>
        <name>S-adenosyl-L-methionine</name>
        <dbReference type="ChEBI" id="CHEBI:59789"/>
    </ligand>
</feature>
<feature type="binding site" evidence="1">
    <location>
        <position position="80"/>
    </location>
    <ligand>
        <name>S-adenosyl-L-methionine</name>
        <dbReference type="ChEBI" id="CHEBI:59789"/>
    </ligand>
</feature>
<feature type="binding site" evidence="1">
    <location>
        <position position="108"/>
    </location>
    <ligand>
        <name>S-adenosyl-L-methionine</name>
        <dbReference type="ChEBI" id="CHEBI:59789"/>
    </ligand>
</feature>
<feature type="binding site" evidence="1">
    <location>
        <position position="109"/>
    </location>
    <ligand>
        <name>S-adenosyl-L-methionine</name>
        <dbReference type="ChEBI" id="CHEBI:59789"/>
    </ligand>
</feature>
<feature type="binding site" evidence="1">
    <location>
        <position position="243"/>
    </location>
    <ligand>
        <name>Zn(2+)</name>
        <dbReference type="ChEBI" id="CHEBI:29105"/>
    </ligand>
</feature>
<feature type="binding site" evidence="1">
    <location>
        <position position="246"/>
    </location>
    <ligand>
        <name>Zn(2+)</name>
        <dbReference type="ChEBI" id="CHEBI:29105"/>
    </ligand>
</feature>
<feature type="binding site" evidence="1">
    <location>
        <position position="258"/>
    </location>
    <ligand>
        <name>Zn(2+)</name>
        <dbReference type="ChEBI" id="CHEBI:29105"/>
    </ligand>
</feature>
<feature type="binding site" evidence="1">
    <location>
        <position position="261"/>
    </location>
    <ligand>
        <name>Zn(2+)</name>
        <dbReference type="ChEBI" id="CHEBI:29105"/>
    </ligand>
</feature>
<gene>
    <name evidence="1" type="primary">trm1</name>
    <name type="ordered locus">MK0154</name>
</gene>
<comment type="function">
    <text evidence="1">Dimethylates a single guanine residue at position 26 of a number of tRNAs using S-adenosyl-L-methionine as donor of the methyl groups.</text>
</comment>
<comment type="catalytic activity">
    <reaction evidence="1">
        <text>guanosine(26) in tRNA + 2 S-adenosyl-L-methionine = N(2)-dimethylguanosine(26) in tRNA + 2 S-adenosyl-L-homocysteine + 2 H(+)</text>
        <dbReference type="Rhea" id="RHEA:43140"/>
        <dbReference type="Rhea" id="RHEA-COMP:10359"/>
        <dbReference type="Rhea" id="RHEA-COMP:10360"/>
        <dbReference type="ChEBI" id="CHEBI:15378"/>
        <dbReference type="ChEBI" id="CHEBI:57856"/>
        <dbReference type="ChEBI" id="CHEBI:59789"/>
        <dbReference type="ChEBI" id="CHEBI:74269"/>
        <dbReference type="ChEBI" id="CHEBI:74513"/>
        <dbReference type="EC" id="2.1.1.216"/>
    </reaction>
</comment>
<comment type="similarity">
    <text evidence="1">Belongs to the class I-like SAM-binding methyltransferase superfamily. Trm1 family.</text>
</comment>
<accession>Q8TYY7</accession>
<organism>
    <name type="scientific">Methanopyrus kandleri (strain AV19 / DSM 6324 / JCM 9639 / NBRC 100938)</name>
    <dbReference type="NCBI Taxonomy" id="190192"/>
    <lineage>
        <taxon>Archaea</taxon>
        <taxon>Methanobacteriati</taxon>
        <taxon>Methanobacteriota</taxon>
        <taxon>Methanomada group</taxon>
        <taxon>Methanopyri</taxon>
        <taxon>Methanopyrales</taxon>
        <taxon>Methanopyraceae</taxon>
        <taxon>Methanopyrus</taxon>
    </lineage>
</organism>
<name>TRM1_METKA</name>
<proteinExistence type="inferred from homology"/>